<gene>
    <name type="primary">nthB</name>
</gene>
<comment type="function">
    <text>NHase catalyzes the hydration of various nitrile compounds to the corresponding amides.</text>
</comment>
<comment type="catalytic activity">
    <reaction>
        <text>an aliphatic primary amide = an aliphatic nitrile + H2O</text>
        <dbReference type="Rhea" id="RHEA:12673"/>
        <dbReference type="ChEBI" id="CHEBI:15377"/>
        <dbReference type="ChEBI" id="CHEBI:65285"/>
        <dbReference type="ChEBI" id="CHEBI:80291"/>
        <dbReference type="EC" id="4.2.1.84"/>
    </reaction>
</comment>
<comment type="subunit">
    <text>Heterodimer of an alpha and a beta chain.</text>
</comment>
<comment type="biotechnology">
    <text>Industrial production of acrylamide is now being developed using some of these enzymes.</text>
</comment>
<comment type="similarity">
    <text evidence="1">Belongs to the nitrile hydratase subunit beta family.</text>
</comment>
<proteinExistence type="evidence at protein level"/>
<sequence>MDGFHDLGGFQGFGKVPHTINSLSYKQVFKQDWEHLAYSLMFVGVDQLKKFSVDEVRHAVERLDVRQHVGTQYYERYIIATATLLVETGVITQAELDQALGSHFKLANPAHATGRPAITGRPPFEVGDRVVVRDEYVAGHIRMPAYVRGKEGVVLHRTSEQWPFPDAIGHGDLSAAHQPTYHVEFRVKDLWGDAADDGYVVVDLFESYLDKAPGAQAVNA</sequence>
<name>NHAB_PSECL</name>
<dbReference type="EC" id="4.2.1.84"/>
<dbReference type="EMBL" id="D90216">
    <property type="protein sequence ID" value="BAA14246.1"/>
    <property type="molecule type" value="Genomic_DNA"/>
</dbReference>
<dbReference type="PIR" id="B42725">
    <property type="entry name" value="B42725"/>
</dbReference>
<dbReference type="SMR" id="P27763"/>
<dbReference type="BioCyc" id="MetaCyc:MONOMER-15568"/>
<dbReference type="GO" id="GO:0018822">
    <property type="term" value="F:nitrile hydratase activity"/>
    <property type="evidence" value="ECO:0007669"/>
    <property type="project" value="UniProtKB-EC"/>
</dbReference>
<dbReference type="GO" id="GO:0046914">
    <property type="term" value="F:transition metal ion binding"/>
    <property type="evidence" value="ECO:0007669"/>
    <property type="project" value="InterPro"/>
</dbReference>
<dbReference type="Gene3D" id="2.30.30.50">
    <property type="match status" value="1"/>
</dbReference>
<dbReference type="Gene3D" id="1.10.472.20">
    <property type="entry name" value="Nitrile hydratase, beta subunit"/>
    <property type="match status" value="1"/>
</dbReference>
<dbReference type="InterPro" id="IPR049054">
    <property type="entry name" value="CN_hydtase_beta-like_N"/>
</dbReference>
<dbReference type="InterPro" id="IPR042262">
    <property type="entry name" value="CN_hydtase_beta_C"/>
</dbReference>
<dbReference type="InterPro" id="IPR024690">
    <property type="entry name" value="CN_hydtase_beta_dom_C"/>
</dbReference>
<dbReference type="InterPro" id="IPR008990">
    <property type="entry name" value="Elect_transpt_acc-like_dom_sf"/>
</dbReference>
<dbReference type="InterPro" id="IPR003168">
    <property type="entry name" value="Nitrile_hydratase_bsu"/>
</dbReference>
<dbReference type="NCBIfam" id="TIGR03888">
    <property type="entry name" value="nitrile_beta"/>
    <property type="match status" value="1"/>
</dbReference>
<dbReference type="Pfam" id="PF02211">
    <property type="entry name" value="NHase_beta_C"/>
    <property type="match status" value="1"/>
</dbReference>
<dbReference type="Pfam" id="PF21006">
    <property type="entry name" value="NHase_beta_N"/>
    <property type="match status" value="1"/>
</dbReference>
<dbReference type="PIRSF" id="PIRSF001427">
    <property type="entry name" value="NHase_beta"/>
    <property type="match status" value="1"/>
</dbReference>
<dbReference type="SUPFAM" id="SSF50090">
    <property type="entry name" value="Electron transport accessory proteins"/>
    <property type="match status" value="1"/>
</dbReference>
<feature type="chain" id="PRO_0000186828" description="Nitrile hydratase subunit beta">
    <location>
        <begin position="1"/>
        <end position="220"/>
    </location>
</feature>
<reference key="1">
    <citation type="journal article" date="1991" name="J. Bacteriol.">
        <title>Cloning and characterization of genes responsible for metabolism of nitrile compounds from Pseudomonas chlororaphis B23.</title>
        <authorList>
            <person name="Nishiyama M."/>
            <person name="Horinouchi S."/>
            <person name="Kobayashi M."/>
            <person name="Nagasawa T."/>
            <person name="Yamada H."/>
            <person name="Beppu T."/>
        </authorList>
    </citation>
    <scope>NUCLEOTIDE SEQUENCE [GENOMIC DNA]</scope>
    <scope>PROTEIN SEQUENCE OF 1-23 AND 158-170</scope>
    <source>
        <strain>B23</strain>
    </source>
</reference>
<evidence type="ECO:0000305" key="1"/>
<protein>
    <recommendedName>
        <fullName>Nitrile hydratase subunit beta</fullName>
        <shortName>NHase</shortName>
        <shortName>Nitrilase</shortName>
        <ecNumber>4.2.1.84</ecNumber>
    </recommendedName>
</protein>
<accession>P27763</accession>
<organism>
    <name type="scientific">Pseudomonas chlororaphis</name>
    <name type="common">Pseudomonas aureofaciens</name>
    <dbReference type="NCBI Taxonomy" id="333"/>
    <lineage>
        <taxon>Bacteria</taxon>
        <taxon>Pseudomonadati</taxon>
        <taxon>Pseudomonadota</taxon>
        <taxon>Gammaproteobacteria</taxon>
        <taxon>Pseudomonadales</taxon>
        <taxon>Pseudomonadaceae</taxon>
        <taxon>Pseudomonas</taxon>
    </lineage>
</organism>
<keyword id="KW-0903">Direct protein sequencing</keyword>
<keyword id="KW-0456">Lyase</keyword>